<keyword id="KW-0963">Cytoplasm</keyword>
<keyword id="KW-1185">Reference proteome</keyword>
<keyword id="KW-0843">Virulence</keyword>
<feature type="chain" id="PRO_0000184135" description="Type III secretion protein HrcQb">
    <location>
        <begin position="1"/>
        <end position="137"/>
    </location>
</feature>
<feature type="region of interest" description="Disordered" evidence="2">
    <location>
        <begin position="1"/>
        <end position="67"/>
    </location>
</feature>
<feature type="compositionally biased region" description="Acidic residues" evidence="2">
    <location>
        <begin position="1"/>
        <end position="22"/>
    </location>
</feature>
<feature type="compositionally biased region" description="Basic and acidic residues" evidence="2">
    <location>
        <begin position="23"/>
        <end position="33"/>
    </location>
</feature>
<feature type="compositionally biased region" description="Acidic residues" evidence="2">
    <location>
        <begin position="36"/>
        <end position="58"/>
    </location>
</feature>
<evidence type="ECO:0000250" key="1"/>
<evidence type="ECO:0000256" key="2">
    <source>
        <dbReference type="SAM" id="MobiDB-lite"/>
    </source>
</evidence>
<evidence type="ECO:0000269" key="3">
    <source>
    </source>
</evidence>
<evidence type="ECO:0000305" key="4"/>
<proteinExistence type="inferred from homology"/>
<dbReference type="EMBL" id="AF232004">
    <property type="protein sequence ID" value="AAG33883.1"/>
    <property type="molecule type" value="Genomic_DNA"/>
</dbReference>
<dbReference type="EMBL" id="AE016853">
    <property type="protein sequence ID" value="AAO54918.1"/>
    <property type="molecule type" value="Genomic_DNA"/>
</dbReference>
<dbReference type="RefSeq" id="NP_791223.1">
    <property type="nucleotide sequence ID" value="NC_004578.1"/>
</dbReference>
<dbReference type="RefSeq" id="WP_005763877.1">
    <property type="nucleotide sequence ID" value="NC_004578.1"/>
</dbReference>
<dbReference type="SMR" id="Q9F0H3"/>
<dbReference type="STRING" id="223283.PSPTO_1396"/>
<dbReference type="GeneID" id="1183032"/>
<dbReference type="KEGG" id="pst:PSPTO_1396"/>
<dbReference type="PATRIC" id="fig|223283.9.peg.1418"/>
<dbReference type="eggNOG" id="COG1886">
    <property type="taxonomic scope" value="Bacteria"/>
</dbReference>
<dbReference type="HOGENOM" id="CLU_1904957_0_0_6"/>
<dbReference type="OrthoDB" id="6516509at2"/>
<dbReference type="Proteomes" id="UP000002515">
    <property type="component" value="Chromosome"/>
</dbReference>
<dbReference type="GO" id="GO:0009425">
    <property type="term" value="C:bacterial-type flagellum basal body"/>
    <property type="evidence" value="ECO:0007669"/>
    <property type="project" value="InterPro"/>
</dbReference>
<dbReference type="GO" id="GO:0005737">
    <property type="term" value="C:cytoplasm"/>
    <property type="evidence" value="ECO:0007669"/>
    <property type="project" value="UniProtKB-SubCell"/>
</dbReference>
<dbReference type="GO" id="GO:0003774">
    <property type="term" value="F:cytoskeletal motor activity"/>
    <property type="evidence" value="ECO:0007669"/>
    <property type="project" value="InterPro"/>
</dbReference>
<dbReference type="GO" id="GO:0071978">
    <property type="term" value="P:bacterial-type flagellum-dependent swarming motility"/>
    <property type="evidence" value="ECO:0007669"/>
    <property type="project" value="TreeGrafter"/>
</dbReference>
<dbReference type="GO" id="GO:0050918">
    <property type="term" value="P:positive chemotaxis"/>
    <property type="evidence" value="ECO:0007669"/>
    <property type="project" value="TreeGrafter"/>
</dbReference>
<dbReference type="Gene3D" id="2.30.330.10">
    <property type="entry name" value="SpoA-like"/>
    <property type="match status" value="1"/>
</dbReference>
<dbReference type="InterPro" id="IPR001543">
    <property type="entry name" value="FliN-like_C"/>
</dbReference>
<dbReference type="InterPro" id="IPR001172">
    <property type="entry name" value="FliN_T3SS_HrcQb"/>
</dbReference>
<dbReference type="InterPro" id="IPR036429">
    <property type="entry name" value="SpoA-like_sf"/>
</dbReference>
<dbReference type="PANTHER" id="PTHR30034">
    <property type="entry name" value="FLAGELLAR MOTOR SWITCH PROTEIN FLIM"/>
    <property type="match status" value="1"/>
</dbReference>
<dbReference type="PANTHER" id="PTHR30034:SF5">
    <property type="entry name" value="SECRETION SYSTEM APPARATUS PROTEIN SSAQ"/>
    <property type="match status" value="1"/>
</dbReference>
<dbReference type="Pfam" id="PF01052">
    <property type="entry name" value="FliMN_C"/>
    <property type="match status" value="1"/>
</dbReference>
<dbReference type="PRINTS" id="PR00956">
    <property type="entry name" value="FLGMOTORFLIN"/>
</dbReference>
<dbReference type="SUPFAM" id="SSF101801">
    <property type="entry name" value="Surface presentation of antigens (SPOA)"/>
    <property type="match status" value="1"/>
</dbReference>
<comment type="function">
    <text evidence="1 3">Component of the type III secretion system, which is required for effector protein delivery, parasitism, and pathogenicity. Probably participates in the formation of a C-ring-like assembly along with HrcQa (By similarity).</text>
</comment>
<comment type="subunit">
    <text evidence="1">Homotetramer. The four monomers assemble into two tightly bound homodimers. Interacts with HrcQa (By similarity).</text>
</comment>
<comment type="subcellular location">
    <subcellularLocation>
        <location evidence="1">Cytoplasm</location>
    </subcellularLocation>
    <text evidence="1">Or loosely associated with a membrane component, probably HrcQa.</text>
</comment>
<comment type="domain">
    <text evidence="1">The HrcQb-C domain interacts with the HrcQa C-terminal domain.</text>
</comment>
<comment type="similarity">
    <text evidence="4">Belongs to the FliN/MopA/SpaO family.</text>
</comment>
<protein>
    <recommendedName>
        <fullName>Type III secretion protein HrcQb</fullName>
    </recommendedName>
</protein>
<gene>
    <name type="primary">hrcQb</name>
    <name type="synonym">hrpU</name>
    <name type="ordered locus">PSPTO_1396</name>
</gene>
<reference key="1">
    <citation type="journal article" date="2000" name="Proc. Natl. Acad. Sci. U.S.A.">
        <title>The Pseudomonas syringae Hrp pathogenicity island has a tripartite mosaic structure composed of a cluster of type III secretion genes bounded by exchangeable effector and conserved effector loci that contribute to parasitic fitness and pathogenicity in plants.</title>
        <authorList>
            <person name="Alfano J.R."/>
            <person name="Charkowski A.O."/>
            <person name="Deng W.-L."/>
            <person name="Badel J.L."/>
            <person name="Petnicki-Ocwieja T."/>
            <person name="van Dijk K."/>
            <person name="Collmer A."/>
        </authorList>
    </citation>
    <scope>NUCLEOTIDE SEQUENCE [GENOMIC DNA]</scope>
    <source>
        <strain>ATCC BAA-871 / DC3000</strain>
    </source>
</reference>
<reference key="2">
    <citation type="journal article" date="2003" name="Mol. Plant Microbe Interact.">
        <title>A Pseudomonas syringae pv. tomato DC3000 Hrp (type III secretion) deletion mutant expressing the Hrp system of bean pathogen P. syringae pv. syringae 61 retains normal host specificity for tomato.</title>
        <authorList>
            <person name="Fouts D.E."/>
            <person name="Badel J.L."/>
            <person name="Ramos A.R."/>
            <person name="Rapp R.A."/>
            <person name="Collmer A."/>
        </authorList>
    </citation>
    <scope>NUCLEOTIDE SEQUENCE [GENOMIC DNA]</scope>
    <scope>FUNCTION</scope>
    <source>
        <strain>ATCC BAA-871 / DC3000</strain>
    </source>
</reference>
<reference key="3">
    <citation type="journal article" date="2003" name="Proc. Natl. Acad. Sci. U.S.A.">
        <title>The complete genome sequence of the Arabidopsis and tomato pathogen Pseudomonas syringae pv. tomato DC3000.</title>
        <authorList>
            <person name="Buell C.R."/>
            <person name="Joardar V."/>
            <person name="Lindeberg M."/>
            <person name="Selengut J."/>
            <person name="Paulsen I.T."/>
            <person name="Gwinn M.L."/>
            <person name="Dodson R.J."/>
            <person name="DeBoy R.T."/>
            <person name="Durkin A.S."/>
            <person name="Kolonay J.F."/>
            <person name="Madupu R."/>
            <person name="Daugherty S.C."/>
            <person name="Brinkac L.M."/>
            <person name="Beanan M.J."/>
            <person name="Haft D.H."/>
            <person name="Nelson W.C."/>
            <person name="Davidsen T.M."/>
            <person name="Zafar N."/>
            <person name="Zhou L."/>
            <person name="Liu J."/>
            <person name="Yuan Q."/>
            <person name="Khouri H.M."/>
            <person name="Fedorova N.B."/>
            <person name="Tran B."/>
            <person name="Russell D."/>
            <person name="Berry K.J."/>
            <person name="Utterback T.R."/>
            <person name="Van Aken S.E."/>
            <person name="Feldblyum T.V."/>
            <person name="D'Ascenzo M."/>
            <person name="Deng W.-L."/>
            <person name="Ramos A.R."/>
            <person name="Alfano J.R."/>
            <person name="Cartinhour S."/>
            <person name="Chatterjee A.K."/>
            <person name="Delaney T.P."/>
            <person name="Lazarowitz S.G."/>
            <person name="Martin G.B."/>
            <person name="Schneider D.J."/>
            <person name="Tang X."/>
            <person name="Bender C.L."/>
            <person name="White O."/>
            <person name="Fraser C.M."/>
            <person name="Collmer A."/>
        </authorList>
    </citation>
    <scope>NUCLEOTIDE SEQUENCE [LARGE SCALE GENOMIC DNA]</scope>
    <source>
        <strain>ATCC BAA-871 / DC3000</strain>
    </source>
</reference>
<accession>Q9F0H3</accession>
<accession>Q7C4K4</accession>
<name>HRCQB_PSESM</name>
<organism>
    <name type="scientific">Pseudomonas syringae pv. tomato (strain ATCC BAA-871 / DC3000)</name>
    <dbReference type="NCBI Taxonomy" id="223283"/>
    <lineage>
        <taxon>Bacteria</taxon>
        <taxon>Pseudomonadati</taxon>
        <taxon>Pseudomonadota</taxon>
        <taxon>Gammaproteobacteria</taxon>
        <taxon>Pseudomonadales</taxon>
        <taxon>Pseudomonadaceae</taxon>
        <taxon>Pseudomonas</taxon>
    </lineage>
</organism>
<sequence length="137" mass="15267">MSTEDLYQDDVESLEDYDDETAEQEHEHEHEQQWAEPDDESEYAEAEPDDDEQEEQEEQQAPSGLDSLALDLTLRCGELRLTLAELRRLDAGTILEVGGVAPGYATLCHGERVVAEGELVDVDGRLGLQITRLAAQP</sequence>